<protein>
    <recommendedName>
        <fullName evidence="1">Ribosome-recycling factor</fullName>
        <shortName evidence="1">RRF</shortName>
    </recommendedName>
    <alternativeName>
        <fullName evidence="1">Ribosome-releasing factor</fullName>
    </alternativeName>
</protein>
<feature type="chain" id="PRO_1000194894" description="Ribosome-recycling factor">
    <location>
        <begin position="1"/>
        <end position="185"/>
    </location>
</feature>
<organism>
    <name type="scientific">Bacillus anthracis (strain CDC 684 / NRRL 3495)</name>
    <dbReference type="NCBI Taxonomy" id="568206"/>
    <lineage>
        <taxon>Bacteria</taxon>
        <taxon>Bacillati</taxon>
        <taxon>Bacillota</taxon>
        <taxon>Bacilli</taxon>
        <taxon>Bacillales</taxon>
        <taxon>Bacillaceae</taxon>
        <taxon>Bacillus</taxon>
        <taxon>Bacillus cereus group</taxon>
    </lineage>
</organism>
<name>RRF_BACAC</name>
<accession>C3L7A3</accession>
<proteinExistence type="inferred from homology"/>
<evidence type="ECO:0000255" key="1">
    <source>
        <dbReference type="HAMAP-Rule" id="MF_00040"/>
    </source>
</evidence>
<dbReference type="EMBL" id="CP001215">
    <property type="protein sequence ID" value="ACP14218.1"/>
    <property type="molecule type" value="Genomic_DNA"/>
</dbReference>
<dbReference type="RefSeq" id="WP_000531503.1">
    <property type="nucleotide sequence ID" value="NC_012581.1"/>
</dbReference>
<dbReference type="SMR" id="C3L7A3"/>
<dbReference type="KEGG" id="bah:BAMEG_0670"/>
<dbReference type="HOGENOM" id="CLU_073981_2_0_9"/>
<dbReference type="GO" id="GO:0005737">
    <property type="term" value="C:cytoplasm"/>
    <property type="evidence" value="ECO:0007669"/>
    <property type="project" value="UniProtKB-SubCell"/>
</dbReference>
<dbReference type="GO" id="GO:0043023">
    <property type="term" value="F:ribosomal large subunit binding"/>
    <property type="evidence" value="ECO:0007669"/>
    <property type="project" value="TreeGrafter"/>
</dbReference>
<dbReference type="GO" id="GO:0006415">
    <property type="term" value="P:translational termination"/>
    <property type="evidence" value="ECO:0007669"/>
    <property type="project" value="UniProtKB-UniRule"/>
</dbReference>
<dbReference type="CDD" id="cd00520">
    <property type="entry name" value="RRF"/>
    <property type="match status" value="1"/>
</dbReference>
<dbReference type="FunFam" id="1.10.132.20:FF:000001">
    <property type="entry name" value="Ribosome-recycling factor"/>
    <property type="match status" value="1"/>
</dbReference>
<dbReference type="FunFam" id="3.30.1360.40:FF:000001">
    <property type="entry name" value="Ribosome-recycling factor"/>
    <property type="match status" value="1"/>
</dbReference>
<dbReference type="Gene3D" id="3.30.1360.40">
    <property type="match status" value="1"/>
</dbReference>
<dbReference type="Gene3D" id="1.10.132.20">
    <property type="entry name" value="Ribosome-recycling factor"/>
    <property type="match status" value="1"/>
</dbReference>
<dbReference type="HAMAP" id="MF_00040">
    <property type="entry name" value="RRF"/>
    <property type="match status" value="1"/>
</dbReference>
<dbReference type="InterPro" id="IPR002661">
    <property type="entry name" value="Ribosome_recyc_fac"/>
</dbReference>
<dbReference type="InterPro" id="IPR023584">
    <property type="entry name" value="Ribosome_recyc_fac_dom"/>
</dbReference>
<dbReference type="InterPro" id="IPR036191">
    <property type="entry name" value="RRF_sf"/>
</dbReference>
<dbReference type="NCBIfam" id="TIGR00496">
    <property type="entry name" value="frr"/>
    <property type="match status" value="1"/>
</dbReference>
<dbReference type="PANTHER" id="PTHR20982:SF3">
    <property type="entry name" value="MITOCHONDRIAL RIBOSOME RECYCLING FACTOR PSEUDO 1"/>
    <property type="match status" value="1"/>
</dbReference>
<dbReference type="PANTHER" id="PTHR20982">
    <property type="entry name" value="RIBOSOME RECYCLING FACTOR"/>
    <property type="match status" value="1"/>
</dbReference>
<dbReference type="Pfam" id="PF01765">
    <property type="entry name" value="RRF"/>
    <property type="match status" value="1"/>
</dbReference>
<dbReference type="SUPFAM" id="SSF55194">
    <property type="entry name" value="Ribosome recycling factor, RRF"/>
    <property type="match status" value="1"/>
</dbReference>
<sequence length="185" mass="20620">MGQQVLKSSNEKMEKAVAAYSRELATVRAGRASASVLDKVQVDYYGAPTPVVQLANITVPEARLLVIQPYDKTSIGDIEKAILKADLGLNPSNDGTVIRIAFPALTEERRRDLVKVVKKYAEEAKVAVRNVRRDGNDDLKKLEKAGEITEDDLRGYTEDIQKETDKYIAKVDEIAKNKEKEIMEV</sequence>
<gene>
    <name evidence="1" type="primary">frr</name>
    <name type="ordered locus">BAMEG_0670</name>
</gene>
<reference key="1">
    <citation type="submission" date="2008-10" db="EMBL/GenBank/DDBJ databases">
        <title>Genome sequence of Bacillus anthracis str. CDC 684.</title>
        <authorList>
            <person name="Dodson R.J."/>
            <person name="Munk A.C."/>
            <person name="Brettin T."/>
            <person name="Bruce D."/>
            <person name="Detter C."/>
            <person name="Tapia R."/>
            <person name="Han C."/>
            <person name="Sutton G."/>
            <person name="Sims D."/>
        </authorList>
    </citation>
    <scope>NUCLEOTIDE SEQUENCE [LARGE SCALE GENOMIC DNA]</scope>
    <source>
        <strain>CDC 684 / NRRL 3495</strain>
    </source>
</reference>
<keyword id="KW-0963">Cytoplasm</keyword>
<keyword id="KW-0648">Protein biosynthesis</keyword>
<comment type="function">
    <text evidence="1">Responsible for the release of ribosomes from messenger RNA at the termination of protein biosynthesis. May increase the efficiency of translation by recycling ribosomes from one round of translation to another.</text>
</comment>
<comment type="subcellular location">
    <subcellularLocation>
        <location evidence="1">Cytoplasm</location>
    </subcellularLocation>
</comment>
<comment type="similarity">
    <text evidence="1">Belongs to the RRF family.</text>
</comment>